<comment type="function">
    <molecule>Corticotropin</molecule>
    <text>Stimulates the adrenal glands to release cortisol.</text>
</comment>
<comment type="function">
    <molecule>Melanocyte-stimulating hormone alpha</molecule>
    <text>Anorexigenic peptide. Increases the pigmentation of skin by increasing melanin production in melanocytes.</text>
</comment>
<comment type="function">
    <molecule>Melanocyte-stimulating hormone beta</molecule>
    <text>Increases the pigmentation of skin by increasing melanin production in melanocytes.</text>
</comment>
<comment type="function">
    <molecule>Beta-endorphin</molecule>
    <text>Endogenous orexigenic opiate.</text>
</comment>
<comment type="function">
    <molecule>Met-enkephalin</molecule>
    <text>Endogenous opiate.</text>
</comment>
<comment type="subcellular location">
    <subcellularLocation>
        <location evidence="2">Secreted</location>
    </subcellularLocation>
    <text evidence="2">Melanocyte-stimulating hormone alpha and beta-endorphin are stored in separate granules in hypothalamic POMC neurons, suggesting that secretion may be under the control of different regulatory mechanisms.</text>
</comment>
<comment type="PTM">
    <text>Specific enzymatic cleavages at paired basic residues yield the different active peptides.</text>
</comment>
<comment type="similarity">
    <text evidence="4">Belongs to the POMC family.</text>
</comment>
<reference key="1">
    <citation type="journal article" date="1989" name="Nucleic Acids Res.">
        <title>Nucleotide sequence of bullfrog pro-opiomelanocortin cDNA.</title>
        <authorList>
            <person name="Pan F.-M."/>
            <person name="Chang W.-C."/>
        </authorList>
    </citation>
    <scope>NUCLEOTIDE SEQUENCE [MRNA]</scope>
</reference>
<reference key="2">
    <citation type="journal article" date="1992" name="Peptides">
        <title>Purification and characterization of joining peptide and N-terminal peptide of proopiomelanocortin from the pars distalis of the bullfrog pituitary.</title>
        <authorList>
            <person name="Iwamuro S."/>
            <person name="Hayashi H."/>
            <person name="Delbende C."/>
            <person name="Vaudry H."/>
            <person name="Kikuyama S."/>
        </authorList>
    </citation>
    <scope>PROTEIN SEQUENCE OF 30-74 AND 107-141</scope>
    <source>
        <tissue>Pituitary</tissue>
    </source>
</reference>
<feature type="signal peptide" evidence="3">
    <location>
        <begin position="1"/>
        <end position="26"/>
    </location>
</feature>
<feature type="peptide" id="PRO_0000025122" description="NPP" evidence="1">
    <location>
        <begin position="27"/>
        <end position="104"/>
    </location>
</feature>
<feature type="peptide" id="PRO_0000025123" description="Melanotropin gamma" evidence="1">
    <location>
        <begin position="77"/>
        <end position="87"/>
    </location>
</feature>
<feature type="propeptide" id="PRO_0000025124">
    <location>
        <begin position="107"/>
        <end position="141"/>
    </location>
</feature>
<feature type="peptide" id="PRO_0000025125" description="Corticotropin" evidence="1">
    <location>
        <begin position="144"/>
        <end position="182"/>
    </location>
</feature>
<feature type="peptide" id="PRO_0000025126" description="Melanocyte-stimulating hormone alpha" evidence="1">
    <location>
        <begin position="144"/>
        <end position="156"/>
    </location>
</feature>
<feature type="peptide" id="PRO_0000025127" description="Corticotropin-like intermediary peptide" evidence="1">
    <location>
        <begin position="162"/>
        <end position="182"/>
    </location>
</feature>
<feature type="peptide" id="PRO_0000025128" description="Lipotropin beta" evidence="1">
    <location>
        <begin position="185"/>
        <end position="263"/>
    </location>
</feature>
<feature type="peptide" id="PRO_0000025129" description="Lipotropin gamma" evidence="1">
    <location>
        <begin position="185"/>
        <end position="230"/>
    </location>
</feature>
<feature type="peptide" id="PRO_0000025130" description="Melanocyte-stimulating hormone beta" evidence="1">
    <location>
        <begin position="214"/>
        <end position="230"/>
    </location>
</feature>
<feature type="peptide" id="PRO_0000025131" description="Beta-endorphin" evidence="1">
    <location>
        <begin position="233"/>
        <end position="263"/>
    </location>
</feature>
<feature type="peptide" id="PRO_0000025132" description="Met-enkephalin" evidence="1">
    <location>
        <begin position="233"/>
        <end position="237"/>
    </location>
</feature>
<feature type="modified residue" description="Pyrrolidone carboxylic acid" evidence="1">
    <location>
        <position position="27"/>
    </location>
</feature>
<feature type="modified residue" description="Phenylalanine amide" evidence="1">
    <location>
        <position position="87"/>
    </location>
</feature>
<feature type="modified residue" description="Valine amide" evidence="1">
    <location>
        <position position="156"/>
    </location>
</feature>
<feature type="glycosylation site" description="N-linked (GlcNAc...) asparagine" evidence="3">
    <location>
        <position position="91"/>
    </location>
</feature>
<feature type="sequence conflict" description="In Ref. 2; AA sequence." evidence="4" ref="2">
    <original>I</original>
    <variation>M</variation>
    <location>
        <position position="67"/>
    </location>
</feature>
<feature type="sequence conflict" description="In Ref. 2; AA sequence." evidence="4" ref="2">
    <original>L</original>
    <variation>P</variation>
    <location>
        <position position="119"/>
    </location>
</feature>
<feature type="sequence conflict" description="In Ref. 2; AA sequence." evidence="4" ref="2">
    <original>D</original>
    <variation>E</variation>
    <location>
        <position position="134"/>
    </location>
</feature>
<gene>
    <name type="primary">pomc</name>
</gene>
<accession>P11885</accession>
<keyword id="KW-0027">Amidation</keyword>
<keyword id="KW-0165">Cleavage on pair of basic residues</keyword>
<keyword id="KW-0903">Direct protein sequencing</keyword>
<keyword id="KW-0257">Endorphin</keyword>
<keyword id="KW-0325">Glycoprotein</keyword>
<keyword id="KW-0372">Hormone</keyword>
<keyword id="KW-0873">Pyrrolidone carboxylic acid</keyword>
<keyword id="KW-0964">Secreted</keyword>
<keyword id="KW-0732">Signal</keyword>
<sequence>MLQPVWHACILAILGVFIFHVGEVRSQCWESNKCTDLSSEDGILECIKACKMDLSAESPVFPGNGHIQPLSENIRKYVMSHFRWNKFGRRNSTSNDNNNNNGGYKREDIANYPILNLFLGSDNQNTQEGIMEDDALDRQDSKRSYSMEHFRWGKPVGKKRRPIKVFPTDAEEESSESFPIELRRELSLEFDYPDTNSEEELDNGELLEGPVKKGRKYKMHHFRWEGPPKDKRYGGFMTPERSQTPLMTLFKNAIIKNAHKKGQ</sequence>
<name>COLI_AQUCT</name>
<protein>
    <recommendedName>
        <fullName>Pro-opiomelanocortin</fullName>
        <shortName>POMC</shortName>
    </recommendedName>
    <alternativeName>
        <fullName>Corticotropin-lipotropin</fullName>
    </alternativeName>
    <component>
        <recommendedName>
            <fullName>NPP</fullName>
        </recommendedName>
    </component>
    <component>
        <recommendedName>
            <fullName>Melanotropin gamma</fullName>
        </recommendedName>
        <alternativeName>
            <fullName>Gamma-MSH</fullName>
        </alternativeName>
    </component>
    <component>
        <recommendedName>
            <fullName>Corticotropin</fullName>
        </recommendedName>
        <alternativeName>
            <fullName>Adrenocorticotropic hormone</fullName>
            <shortName>ACTH</shortName>
        </alternativeName>
    </component>
    <component>
        <recommendedName>
            <fullName>Melanocyte-stimulating hormone alpha</fullName>
            <shortName>Alpha-MSH</shortName>
        </recommendedName>
        <alternativeName>
            <fullName>Melanotropin alpha</fullName>
        </alternativeName>
    </component>
    <component>
        <recommendedName>
            <fullName>Corticotropin-like intermediary peptide</fullName>
            <shortName>CLIP</shortName>
        </recommendedName>
    </component>
    <component>
        <recommendedName>
            <fullName>Lipotropin beta</fullName>
        </recommendedName>
        <alternativeName>
            <fullName>Beta-LPH</fullName>
        </alternativeName>
    </component>
    <component>
        <recommendedName>
            <fullName>Lipotropin gamma</fullName>
        </recommendedName>
        <alternativeName>
            <fullName>Gamma-LPH</fullName>
        </alternativeName>
    </component>
    <component>
        <recommendedName>
            <fullName>Melanocyte-stimulating hormone beta</fullName>
            <shortName>Beta-MSH</shortName>
        </recommendedName>
        <alternativeName>
            <fullName>Melanotropin beta</fullName>
        </alternativeName>
    </component>
    <component>
        <recommendedName>
            <fullName>Beta-endorphin</fullName>
        </recommendedName>
    </component>
    <component>
        <recommendedName>
            <fullName>Met-enkephalin</fullName>
        </recommendedName>
    </component>
</protein>
<dbReference type="EMBL" id="X15510">
    <property type="protein sequence ID" value="CAA33530.1"/>
    <property type="molecule type" value="mRNA"/>
</dbReference>
<dbReference type="PIR" id="S05433">
    <property type="entry name" value="S05433"/>
</dbReference>
<dbReference type="SMR" id="P11885"/>
<dbReference type="GlyCosmos" id="P11885">
    <property type="glycosylation" value="1 site, No reported glycans"/>
</dbReference>
<dbReference type="GO" id="GO:0005615">
    <property type="term" value="C:extracellular space"/>
    <property type="evidence" value="ECO:0007669"/>
    <property type="project" value="TreeGrafter"/>
</dbReference>
<dbReference type="GO" id="GO:0030141">
    <property type="term" value="C:secretory granule"/>
    <property type="evidence" value="ECO:0007669"/>
    <property type="project" value="TreeGrafter"/>
</dbReference>
<dbReference type="GO" id="GO:0001664">
    <property type="term" value="F:G protein-coupled receptor binding"/>
    <property type="evidence" value="ECO:0007669"/>
    <property type="project" value="TreeGrafter"/>
</dbReference>
<dbReference type="GO" id="GO:0005179">
    <property type="term" value="F:hormone activity"/>
    <property type="evidence" value="ECO:0007669"/>
    <property type="project" value="UniProtKB-KW"/>
</dbReference>
<dbReference type="GO" id="GO:0007218">
    <property type="term" value="P:neuropeptide signaling pathway"/>
    <property type="evidence" value="ECO:0007669"/>
    <property type="project" value="UniProtKB-KW"/>
</dbReference>
<dbReference type="GO" id="GO:2000852">
    <property type="term" value="P:regulation of corticosterone secretion"/>
    <property type="evidence" value="ECO:0007669"/>
    <property type="project" value="TreeGrafter"/>
</dbReference>
<dbReference type="InterPro" id="IPR013531">
    <property type="entry name" value="Mcrtin_ACTH_cent"/>
</dbReference>
<dbReference type="InterPro" id="IPR013593">
    <property type="entry name" value="Melanocortin_N"/>
</dbReference>
<dbReference type="InterPro" id="IPR013532">
    <property type="entry name" value="Opioid_neuropept"/>
</dbReference>
<dbReference type="InterPro" id="IPR001941">
    <property type="entry name" value="PMOC"/>
</dbReference>
<dbReference type="InterPro" id="IPR050878">
    <property type="entry name" value="POMC-derived_peptides"/>
</dbReference>
<dbReference type="PANTHER" id="PTHR11416">
    <property type="entry name" value="PRO-OPIOMELANOCORTIN"/>
    <property type="match status" value="1"/>
</dbReference>
<dbReference type="PANTHER" id="PTHR11416:SF7">
    <property type="entry name" value="PRO-OPIOMELANOCORTIN"/>
    <property type="match status" value="1"/>
</dbReference>
<dbReference type="Pfam" id="PF00976">
    <property type="entry name" value="ACTH_domain"/>
    <property type="match status" value="3"/>
</dbReference>
<dbReference type="Pfam" id="PF08384">
    <property type="entry name" value="NPP"/>
    <property type="match status" value="1"/>
</dbReference>
<dbReference type="Pfam" id="PF08035">
    <property type="entry name" value="Op_neuropeptide"/>
    <property type="match status" value="1"/>
</dbReference>
<dbReference type="PRINTS" id="PR00383">
    <property type="entry name" value="MELANOCORTIN"/>
</dbReference>
<dbReference type="SMART" id="SM01363">
    <property type="entry name" value="ACTH_domain"/>
    <property type="match status" value="3"/>
</dbReference>
<dbReference type="SMART" id="SM01364">
    <property type="entry name" value="NPP"/>
    <property type="match status" value="1"/>
</dbReference>
<dbReference type="SMART" id="SM01365">
    <property type="entry name" value="Op_neuropeptide"/>
    <property type="match status" value="1"/>
</dbReference>
<proteinExistence type="evidence at protein level"/>
<organism>
    <name type="scientific">Aquarana catesbeiana</name>
    <name type="common">American bullfrog</name>
    <name type="synonym">Rana catesbeiana</name>
    <dbReference type="NCBI Taxonomy" id="8400"/>
    <lineage>
        <taxon>Eukaryota</taxon>
        <taxon>Metazoa</taxon>
        <taxon>Chordata</taxon>
        <taxon>Craniata</taxon>
        <taxon>Vertebrata</taxon>
        <taxon>Euteleostomi</taxon>
        <taxon>Amphibia</taxon>
        <taxon>Batrachia</taxon>
        <taxon>Anura</taxon>
        <taxon>Neobatrachia</taxon>
        <taxon>Ranoidea</taxon>
        <taxon>Ranidae</taxon>
        <taxon>Aquarana</taxon>
    </lineage>
</organism>
<evidence type="ECO:0000250" key="1"/>
<evidence type="ECO:0000250" key="2">
    <source>
        <dbReference type="UniProtKB" id="P01193"/>
    </source>
</evidence>
<evidence type="ECO:0000255" key="3"/>
<evidence type="ECO:0000305" key="4"/>